<evidence type="ECO:0000255" key="1">
    <source>
        <dbReference type="HAMAP-Rule" id="MF_00079"/>
    </source>
</evidence>
<gene>
    <name evidence="1" type="primary">hisG</name>
    <name type="ordered locus">Cag_0211</name>
</gene>
<protein>
    <recommendedName>
        <fullName evidence="1">ATP phosphoribosyltransferase</fullName>
        <shortName evidence="1">ATP-PRT</shortName>
        <shortName evidence="1">ATP-PRTase</shortName>
        <ecNumber evidence="1">2.4.2.17</ecNumber>
    </recommendedName>
</protein>
<accession>Q3AU36</accession>
<sequence length="294" mass="32536">MSNENKVLKLGLPKGSLQDSTIDLFAQAGFHFSVQSRSYFPSIDDDELEAILIRAQEMAHYVELGAFDVGLTGKDWIIETDADVVEVADLVYSKASMRPVRWVLCVPESSSIQSVKDLEGKHIATEVVNITKKYLAQHGVNASVEFSWGATEVKPPDLADAIVEVTETGTSLRANKLRIIDTLLESNTKLIANRQSWEDPWKREKIENMAMLLLGAINAHGKVGLKMNAPKASLEKLMSIIPALRQPTISALADAEWVALEVIVTEKIVRKLIPELKRAGAEGIFEYNINKLID</sequence>
<organism>
    <name type="scientific">Chlorobium chlorochromatii (strain CaD3)</name>
    <dbReference type="NCBI Taxonomy" id="340177"/>
    <lineage>
        <taxon>Bacteria</taxon>
        <taxon>Pseudomonadati</taxon>
        <taxon>Chlorobiota</taxon>
        <taxon>Chlorobiia</taxon>
        <taxon>Chlorobiales</taxon>
        <taxon>Chlorobiaceae</taxon>
        <taxon>Chlorobium/Pelodictyon group</taxon>
        <taxon>Chlorobium</taxon>
    </lineage>
</organism>
<keyword id="KW-0028">Amino-acid biosynthesis</keyword>
<keyword id="KW-0067">ATP-binding</keyword>
<keyword id="KW-0963">Cytoplasm</keyword>
<keyword id="KW-0328">Glycosyltransferase</keyword>
<keyword id="KW-0368">Histidine biosynthesis</keyword>
<keyword id="KW-0460">Magnesium</keyword>
<keyword id="KW-0479">Metal-binding</keyword>
<keyword id="KW-0547">Nucleotide-binding</keyword>
<keyword id="KW-0808">Transferase</keyword>
<name>HIS1_CHLCH</name>
<proteinExistence type="inferred from homology"/>
<feature type="chain" id="PRO_1000004452" description="ATP phosphoribosyltransferase">
    <location>
        <begin position="1"/>
        <end position="294"/>
    </location>
</feature>
<reference key="1">
    <citation type="submission" date="2005-08" db="EMBL/GenBank/DDBJ databases">
        <title>Complete sequence of Chlorobium chlorochromatii CaD3.</title>
        <authorList>
            <consortium name="US DOE Joint Genome Institute"/>
            <person name="Copeland A."/>
            <person name="Lucas S."/>
            <person name="Lapidus A."/>
            <person name="Barry K."/>
            <person name="Detter J.C."/>
            <person name="Glavina T."/>
            <person name="Hammon N."/>
            <person name="Israni S."/>
            <person name="Pitluck S."/>
            <person name="Bryant D."/>
            <person name="Schmutz J."/>
            <person name="Larimer F."/>
            <person name="Land M."/>
            <person name="Kyrpides N."/>
            <person name="Ivanova N."/>
            <person name="Richardson P."/>
        </authorList>
    </citation>
    <scope>NUCLEOTIDE SEQUENCE [LARGE SCALE GENOMIC DNA]</scope>
    <source>
        <strain>CaD3</strain>
    </source>
</reference>
<dbReference type="EC" id="2.4.2.17" evidence="1"/>
<dbReference type="EMBL" id="CP000108">
    <property type="protein sequence ID" value="ABB27489.1"/>
    <property type="molecule type" value="Genomic_DNA"/>
</dbReference>
<dbReference type="SMR" id="Q3AU36"/>
<dbReference type="STRING" id="340177.Cag_0211"/>
<dbReference type="KEGG" id="cch:Cag_0211"/>
<dbReference type="eggNOG" id="COG0040">
    <property type="taxonomic scope" value="Bacteria"/>
</dbReference>
<dbReference type="HOGENOM" id="CLU_038115_1_1_10"/>
<dbReference type="OrthoDB" id="9801867at2"/>
<dbReference type="UniPathway" id="UPA00031">
    <property type="reaction ID" value="UER00006"/>
</dbReference>
<dbReference type="GO" id="GO:0005737">
    <property type="term" value="C:cytoplasm"/>
    <property type="evidence" value="ECO:0007669"/>
    <property type="project" value="UniProtKB-SubCell"/>
</dbReference>
<dbReference type="GO" id="GO:0005524">
    <property type="term" value="F:ATP binding"/>
    <property type="evidence" value="ECO:0007669"/>
    <property type="project" value="UniProtKB-KW"/>
</dbReference>
<dbReference type="GO" id="GO:0003879">
    <property type="term" value="F:ATP phosphoribosyltransferase activity"/>
    <property type="evidence" value="ECO:0007669"/>
    <property type="project" value="UniProtKB-UniRule"/>
</dbReference>
<dbReference type="GO" id="GO:0000287">
    <property type="term" value="F:magnesium ion binding"/>
    <property type="evidence" value="ECO:0007669"/>
    <property type="project" value="UniProtKB-UniRule"/>
</dbReference>
<dbReference type="GO" id="GO:0000105">
    <property type="term" value="P:L-histidine biosynthetic process"/>
    <property type="evidence" value="ECO:0007669"/>
    <property type="project" value="UniProtKB-UniRule"/>
</dbReference>
<dbReference type="CDD" id="cd13593">
    <property type="entry name" value="PBP2_HisGL3"/>
    <property type="match status" value="1"/>
</dbReference>
<dbReference type="FunFam" id="3.30.70.120:FF:000002">
    <property type="entry name" value="ATP phosphoribosyltransferase"/>
    <property type="match status" value="1"/>
</dbReference>
<dbReference type="Gene3D" id="3.30.70.120">
    <property type="match status" value="1"/>
</dbReference>
<dbReference type="Gene3D" id="3.40.190.10">
    <property type="entry name" value="Periplasmic binding protein-like II"/>
    <property type="match status" value="2"/>
</dbReference>
<dbReference type="HAMAP" id="MF_00079">
    <property type="entry name" value="HisG_Long"/>
    <property type="match status" value="1"/>
</dbReference>
<dbReference type="InterPro" id="IPR020621">
    <property type="entry name" value="ATP-PRT_HisG_long"/>
</dbReference>
<dbReference type="InterPro" id="IPR013820">
    <property type="entry name" value="ATP_PRibTrfase_cat"/>
</dbReference>
<dbReference type="InterPro" id="IPR001348">
    <property type="entry name" value="ATP_PRibTrfase_HisG"/>
</dbReference>
<dbReference type="InterPro" id="IPR013115">
    <property type="entry name" value="HisG_C"/>
</dbReference>
<dbReference type="InterPro" id="IPR011322">
    <property type="entry name" value="N-reg_PII-like_a/b"/>
</dbReference>
<dbReference type="InterPro" id="IPR015867">
    <property type="entry name" value="N-reg_PII/ATP_PRibTrfase_C"/>
</dbReference>
<dbReference type="NCBIfam" id="TIGR00070">
    <property type="entry name" value="hisG"/>
    <property type="match status" value="1"/>
</dbReference>
<dbReference type="NCBIfam" id="TIGR03455">
    <property type="entry name" value="HisG_C-term"/>
    <property type="match status" value="1"/>
</dbReference>
<dbReference type="PANTHER" id="PTHR21403:SF10">
    <property type="entry name" value="ATP PHOSPHORIBOSYLTRANSFERASE"/>
    <property type="match status" value="1"/>
</dbReference>
<dbReference type="PANTHER" id="PTHR21403">
    <property type="entry name" value="ATP PHOSPHORIBOSYLTRANSFERASE ATP-PRTASE"/>
    <property type="match status" value="1"/>
</dbReference>
<dbReference type="Pfam" id="PF01634">
    <property type="entry name" value="HisG"/>
    <property type="match status" value="1"/>
</dbReference>
<dbReference type="Pfam" id="PF08029">
    <property type="entry name" value="HisG_C"/>
    <property type="match status" value="1"/>
</dbReference>
<dbReference type="SUPFAM" id="SSF54913">
    <property type="entry name" value="GlnB-like"/>
    <property type="match status" value="1"/>
</dbReference>
<dbReference type="SUPFAM" id="SSF53850">
    <property type="entry name" value="Periplasmic binding protein-like II"/>
    <property type="match status" value="1"/>
</dbReference>
<comment type="function">
    <text evidence="1">Catalyzes the condensation of ATP and 5-phosphoribose 1-diphosphate to form N'-(5'-phosphoribosyl)-ATP (PR-ATP). Has a crucial role in the pathway because the rate of histidine biosynthesis seems to be controlled primarily by regulation of HisG enzymatic activity.</text>
</comment>
<comment type="catalytic activity">
    <reaction evidence="1">
        <text>1-(5-phospho-beta-D-ribosyl)-ATP + diphosphate = 5-phospho-alpha-D-ribose 1-diphosphate + ATP</text>
        <dbReference type="Rhea" id="RHEA:18473"/>
        <dbReference type="ChEBI" id="CHEBI:30616"/>
        <dbReference type="ChEBI" id="CHEBI:33019"/>
        <dbReference type="ChEBI" id="CHEBI:58017"/>
        <dbReference type="ChEBI" id="CHEBI:73183"/>
        <dbReference type="EC" id="2.4.2.17"/>
    </reaction>
</comment>
<comment type="cofactor">
    <cofactor evidence="1">
        <name>Mg(2+)</name>
        <dbReference type="ChEBI" id="CHEBI:18420"/>
    </cofactor>
</comment>
<comment type="activity regulation">
    <text evidence="1">Feedback inhibited by histidine.</text>
</comment>
<comment type="pathway">
    <text evidence="1">Amino-acid biosynthesis; L-histidine biosynthesis; L-histidine from 5-phospho-alpha-D-ribose 1-diphosphate: step 1/9.</text>
</comment>
<comment type="subcellular location">
    <subcellularLocation>
        <location evidence="1">Cytoplasm</location>
    </subcellularLocation>
</comment>
<comment type="similarity">
    <text evidence="1">Belongs to the ATP phosphoribosyltransferase family. Long subfamily.</text>
</comment>